<keyword id="KW-0687">Ribonucleoprotein</keyword>
<keyword id="KW-0689">Ribosomal protein</keyword>
<protein>
    <recommendedName>
        <fullName evidence="1">Large ribosomal subunit protein bL33</fullName>
    </recommendedName>
    <alternativeName>
        <fullName evidence="2">50S ribosomal protein L33</fullName>
    </alternativeName>
</protein>
<accession>Q31UZ0</accession>
<sequence>MAKGIREKIKLVSSAGTGHFYTTTKNKRTKPEKLELKKFDPVVRQHVIYKEAKIK</sequence>
<evidence type="ECO:0000255" key="1">
    <source>
        <dbReference type="HAMAP-Rule" id="MF_00294"/>
    </source>
</evidence>
<evidence type="ECO:0000305" key="2"/>
<dbReference type="EMBL" id="CP000036">
    <property type="protein sequence ID" value="ABB68118.1"/>
    <property type="molecule type" value="Genomic_DNA"/>
</dbReference>
<dbReference type="RefSeq" id="WP_001051798.1">
    <property type="nucleotide sequence ID" value="NC_007613.1"/>
</dbReference>
<dbReference type="SMR" id="Q31UZ0"/>
<dbReference type="GeneID" id="97607673"/>
<dbReference type="KEGG" id="sbo:SBO_3638"/>
<dbReference type="HOGENOM" id="CLU_190949_1_1_6"/>
<dbReference type="Proteomes" id="UP000007067">
    <property type="component" value="Chromosome"/>
</dbReference>
<dbReference type="GO" id="GO:0022625">
    <property type="term" value="C:cytosolic large ribosomal subunit"/>
    <property type="evidence" value="ECO:0007669"/>
    <property type="project" value="TreeGrafter"/>
</dbReference>
<dbReference type="GO" id="GO:0003735">
    <property type="term" value="F:structural constituent of ribosome"/>
    <property type="evidence" value="ECO:0007669"/>
    <property type="project" value="InterPro"/>
</dbReference>
<dbReference type="GO" id="GO:0006412">
    <property type="term" value="P:translation"/>
    <property type="evidence" value="ECO:0007669"/>
    <property type="project" value="UniProtKB-UniRule"/>
</dbReference>
<dbReference type="FunFam" id="2.20.28.120:FF:000001">
    <property type="entry name" value="50S ribosomal protein L33"/>
    <property type="match status" value="1"/>
</dbReference>
<dbReference type="Gene3D" id="2.20.28.120">
    <property type="entry name" value="Ribosomal protein L33"/>
    <property type="match status" value="1"/>
</dbReference>
<dbReference type="HAMAP" id="MF_00294">
    <property type="entry name" value="Ribosomal_bL33"/>
    <property type="match status" value="1"/>
</dbReference>
<dbReference type="InterPro" id="IPR001705">
    <property type="entry name" value="Ribosomal_bL33"/>
</dbReference>
<dbReference type="InterPro" id="IPR018264">
    <property type="entry name" value="Ribosomal_bL33_CS"/>
</dbReference>
<dbReference type="InterPro" id="IPR038584">
    <property type="entry name" value="Ribosomal_bL33_sf"/>
</dbReference>
<dbReference type="InterPro" id="IPR011332">
    <property type="entry name" value="Ribosomal_zn-bd"/>
</dbReference>
<dbReference type="NCBIfam" id="NF001860">
    <property type="entry name" value="PRK00595.1"/>
    <property type="match status" value="1"/>
</dbReference>
<dbReference type="NCBIfam" id="TIGR01023">
    <property type="entry name" value="rpmG_bact"/>
    <property type="match status" value="1"/>
</dbReference>
<dbReference type="PANTHER" id="PTHR15238">
    <property type="entry name" value="54S RIBOSOMAL PROTEIN L39, MITOCHONDRIAL"/>
    <property type="match status" value="1"/>
</dbReference>
<dbReference type="PANTHER" id="PTHR15238:SF1">
    <property type="entry name" value="LARGE RIBOSOMAL SUBUNIT PROTEIN BL33M"/>
    <property type="match status" value="1"/>
</dbReference>
<dbReference type="Pfam" id="PF00471">
    <property type="entry name" value="Ribosomal_L33"/>
    <property type="match status" value="1"/>
</dbReference>
<dbReference type="SUPFAM" id="SSF57829">
    <property type="entry name" value="Zn-binding ribosomal proteins"/>
    <property type="match status" value="1"/>
</dbReference>
<dbReference type="PROSITE" id="PS00582">
    <property type="entry name" value="RIBOSOMAL_L33"/>
    <property type="match status" value="1"/>
</dbReference>
<name>RL33_SHIBS</name>
<organism>
    <name type="scientific">Shigella boydii serotype 4 (strain Sb227)</name>
    <dbReference type="NCBI Taxonomy" id="300268"/>
    <lineage>
        <taxon>Bacteria</taxon>
        <taxon>Pseudomonadati</taxon>
        <taxon>Pseudomonadota</taxon>
        <taxon>Gammaproteobacteria</taxon>
        <taxon>Enterobacterales</taxon>
        <taxon>Enterobacteriaceae</taxon>
        <taxon>Shigella</taxon>
    </lineage>
</organism>
<gene>
    <name evidence="1" type="primary">rpmG</name>
    <name type="ordered locus">SBO_3638</name>
</gene>
<comment type="similarity">
    <text evidence="1">Belongs to the bacterial ribosomal protein bL33 family.</text>
</comment>
<feature type="chain" id="PRO_1000004192" description="Large ribosomal subunit protein bL33">
    <location>
        <begin position="1"/>
        <end position="55"/>
    </location>
</feature>
<reference key="1">
    <citation type="journal article" date="2005" name="Nucleic Acids Res.">
        <title>Genome dynamics and diversity of Shigella species, the etiologic agents of bacillary dysentery.</title>
        <authorList>
            <person name="Yang F."/>
            <person name="Yang J."/>
            <person name="Zhang X."/>
            <person name="Chen L."/>
            <person name="Jiang Y."/>
            <person name="Yan Y."/>
            <person name="Tang X."/>
            <person name="Wang J."/>
            <person name="Xiong Z."/>
            <person name="Dong J."/>
            <person name="Xue Y."/>
            <person name="Zhu Y."/>
            <person name="Xu X."/>
            <person name="Sun L."/>
            <person name="Chen S."/>
            <person name="Nie H."/>
            <person name="Peng J."/>
            <person name="Xu J."/>
            <person name="Wang Y."/>
            <person name="Yuan Z."/>
            <person name="Wen Y."/>
            <person name="Yao Z."/>
            <person name="Shen Y."/>
            <person name="Qiang B."/>
            <person name="Hou Y."/>
            <person name="Yu J."/>
            <person name="Jin Q."/>
        </authorList>
    </citation>
    <scope>NUCLEOTIDE SEQUENCE [LARGE SCALE GENOMIC DNA]</scope>
    <source>
        <strain>Sb227</strain>
    </source>
</reference>
<proteinExistence type="inferred from homology"/>